<protein>
    <recommendedName>
        <fullName evidence="1">tRNA pseudouridine synthase A</fullName>
        <ecNumber evidence="1">5.4.99.12</ecNumber>
    </recommendedName>
    <alternativeName>
        <fullName evidence="1">tRNA pseudouridine(38-40) synthase</fullName>
    </alternativeName>
    <alternativeName>
        <fullName evidence="1">tRNA pseudouridylate synthase I</fullName>
    </alternativeName>
    <alternativeName>
        <fullName evidence="1">tRNA-uridine isomerase I</fullName>
    </alternativeName>
</protein>
<reference key="1">
    <citation type="journal article" date="2002" name="Proc. Natl. Acad. Sci. U.S.A.">
        <title>The genome sequence of the facultative intracellular pathogen Brucella melitensis.</title>
        <authorList>
            <person name="DelVecchio V.G."/>
            <person name="Kapatral V."/>
            <person name="Redkar R.J."/>
            <person name="Patra G."/>
            <person name="Mujer C."/>
            <person name="Los T."/>
            <person name="Ivanova N."/>
            <person name="Anderson I."/>
            <person name="Bhattacharyya A."/>
            <person name="Lykidis A."/>
            <person name="Reznik G."/>
            <person name="Jablonski L."/>
            <person name="Larsen N."/>
            <person name="D'Souza M."/>
            <person name="Bernal A."/>
            <person name="Mazur M."/>
            <person name="Goltsman E."/>
            <person name="Selkov E."/>
            <person name="Elzer P.H."/>
            <person name="Hagius S."/>
            <person name="O'Callaghan D."/>
            <person name="Letesson J.-J."/>
            <person name="Haselkorn R."/>
            <person name="Kyrpides N.C."/>
            <person name="Overbeek R."/>
        </authorList>
    </citation>
    <scope>NUCLEOTIDE SEQUENCE [LARGE SCALE GENOMIC DNA]</scope>
    <source>
        <strain>ATCC 23456 / CCUG 17765 / NCTC 10094 / 16M</strain>
    </source>
</reference>
<evidence type="ECO:0000255" key="1">
    <source>
        <dbReference type="HAMAP-Rule" id="MF_00171"/>
    </source>
</evidence>
<name>TRUA_BRUME</name>
<accession>Q8YDB2</accession>
<sequence length="251" mass="28172">MPRYKLTVEYDGTPYVGWQRQENGHAVQGAIEQAFKKFCGEDLTLSAAGRTDAGVHATAQVAHVDLAKDWGAGKVRDAVNAHLVMADERISILNVEKTTDTFDARFSARARHYLYRIHNRRAPLAVDYQRAWWVQKQLDADAMHEAAQRLLGEHDFTTFRATQCQAKSPVKTLDRLDVTRNGDMVEMRVSARSFLHNQVRSFAGSLMEVGVGRWTADDLQAALEARDRKACGQVAPPYGLYLVGVDYAFPF</sequence>
<proteinExistence type="inferred from homology"/>
<gene>
    <name evidence="1" type="primary">truA</name>
    <name type="ordered locus">BMEII0266</name>
</gene>
<organism>
    <name type="scientific">Brucella melitensis biotype 1 (strain ATCC 23456 / CCUG 17765 / NCTC 10094 / 16M)</name>
    <dbReference type="NCBI Taxonomy" id="224914"/>
    <lineage>
        <taxon>Bacteria</taxon>
        <taxon>Pseudomonadati</taxon>
        <taxon>Pseudomonadota</taxon>
        <taxon>Alphaproteobacteria</taxon>
        <taxon>Hyphomicrobiales</taxon>
        <taxon>Brucellaceae</taxon>
        <taxon>Brucella/Ochrobactrum group</taxon>
        <taxon>Brucella</taxon>
    </lineage>
</organism>
<keyword id="KW-0413">Isomerase</keyword>
<keyword id="KW-0819">tRNA processing</keyword>
<feature type="chain" id="PRO_0000057346" description="tRNA pseudouridine synthase A">
    <location>
        <begin position="1"/>
        <end position="251"/>
    </location>
</feature>
<feature type="active site" description="Nucleophile" evidence="1">
    <location>
        <position position="52"/>
    </location>
</feature>
<feature type="binding site" evidence="1">
    <location>
        <position position="113"/>
    </location>
    <ligand>
        <name>substrate</name>
    </ligand>
</feature>
<dbReference type="EC" id="5.4.99.12" evidence="1"/>
<dbReference type="EMBL" id="AE008918">
    <property type="protein sequence ID" value="AAL53507.1"/>
    <property type="molecule type" value="Genomic_DNA"/>
</dbReference>
<dbReference type="PIR" id="AH3542">
    <property type="entry name" value="AH3542"/>
</dbReference>
<dbReference type="RefSeq" id="WP_002965618.1">
    <property type="nucleotide sequence ID" value="NZ_GG703779.1"/>
</dbReference>
<dbReference type="SMR" id="Q8YDB2"/>
<dbReference type="GeneID" id="97534918"/>
<dbReference type="KEGG" id="bme:BMEII0266"/>
<dbReference type="KEGG" id="bmel:DK63_2976"/>
<dbReference type="PATRIC" id="fig|224914.52.peg.3122"/>
<dbReference type="eggNOG" id="COG0101">
    <property type="taxonomic scope" value="Bacteria"/>
</dbReference>
<dbReference type="PhylomeDB" id="Q8YDB2"/>
<dbReference type="Proteomes" id="UP000000419">
    <property type="component" value="Chromosome II"/>
</dbReference>
<dbReference type="GO" id="GO:0003723">
    <property type="term" value="F:RNA binding"/>
    <property type="evidence" value="ECO:0007669"/>
    <property type="project" value="InterPro"/>
</dbReference>
<dbReference type="GO" id="GO:0160147">
    <property type="term" value="F:tRNA pseudouridine(38-40) synthase activity"/>
    <property type="evidence" value="ECO:0007669"/>
    <property type="project" value="UniProtKB-EC"/>
</dbReference>
<dbReference type="GO" id="GO:0031119">
    <property type="term" value="P:tRNA pseudouridine synthesis"/>
    <property type="evidence" value="ECO:0007669"/>
    <property type="project" value="UniProtKB-UniRule"/>
</dbReference>
<dbReference type="CDD" id="cd02570">
    <property type="entry name" value="PseudoU_synth_EcTruA"/>
    <property type="match status" value="1"/>
</dbReference>
<dbReference type="FunFam" id="3.30.70.580:FF:000001">
    <property type="entry name" value="tRNA pseudouridine synthase A"/>
    <property type="match status" value="1"/>
</dbReference>
<dbReference type="Gene3D" id="3.30.70.660">
    <property type="entry name" value="Pseudouridine synthase I, catalytic domain, C-terminal subdomain"/>
    <property type="match status" value="1"/>
</dbReference>
<dbReference type="Gene3D" id="3.30.70.580">
    <property type="entry name" value="Pseudouridine synthase I, catalytic domain, N-terminal subdomain"/>
    <property type="match status" value="1"/>
</dbReference>
<dbReference type="HAMAP" id="MF_00171">
    <property type="entry name" value="TruA"/>
    <property type="match status" value="1"/>
</dbReference>
<dbReference type="InterPro" id="IPR020103">
    <property type="entry name" value="PsdUridine_synth_cat_dom_sf"/>
</dbReference>
<dbReference type="InterPro" id="IPR001406">
    <property type="entry name" value="PsdUridine_synth_TruA"/>
</dbReference>
<dbReference type="InterPro" id="IPR020097">
    <property type="entry name" value="PsdUridine_synth_TruA_a/b_dom"/>
</dbReference>
<dbReference type="InterPro" id="IPR020095">
    <property type="entry name" value="PsdUridine_synth_TruA_C"/>
</dbReference>
<dbReference type="InterPro" id="IPR020094">
    <property type="entry name" value="TruA/RsuA/RluB/E/F_N"/>
</dbReference>
<dbReference type="NCBIfam" id="TIGR00071">
    <property type="entry name" value="hisT_truA"/>
    <property type="match status" value="1"/>
</dbReference>
<dbReference type="PANTHER" id="PTHR11142">
    <property type="entry name" value="PSEUDOURIDYLATE SYNTHASE"/>
    <property type="match status" value="1"/>
</dbReference>
<dbReference type="PANTHER" id="PTHR11142:SF0">
    <property type="entry name" value="TRNA PSEUDOURIDINE SYNTHASE-LIKE 1"/>
    <property type="match status" value="1"/>
</dbReference>
<dbReference type="Pfam" id="PF01416">
    <property type="entry name" value="PseudoU_synth_1"/>
    <property type="match status" value="2"/>
</dbReference>
<dbReference type="PIRSF" id="PIRSF001430">
    <property type="entry name" value="tRNA_psdUrid_synth"/>
    <property type="match status" value="1"/>
</dbReference>
<dbReference type="SUPFAM" id="SSF55120">
    <property type="entry name" value="Pseudouridine synthase"/>
    <property type="match status" value="1"/>
</dbReference>
<comment type="function">
    <text evidence="1">Formation of pseudouridine at positions 38, 39 and 40 in the anticodon stem and loop of transfer RNAs.</text>
</comment>
<comment type="catalytic activity">
    <reaction evidence="1">
        <text>uridine(38/39/40) in tRNA = pseudouridine(38/39/40) in tRNA</text>
        <dbReference type="Rhea" id="RHEA:22376"/>
        <dbReference type="Rhea" id="RHEA-COMP:10085"/>
        <dbReference type="Rhea" id="RHEA-COMP:10087"/>
        <dbReference type="ChEBI" id="CHEBI:65314"/>
        <dbReference type="ChEBI" id="CHEBI:65315"/>
        <dbReference type="EC" id="5.4.99.12"/>
    </reaction>
</comment>
<comment type="subunit">
    <text evidence="1">Homodimer.</text>
</comment>
<comment type="similarity">
    <text evidence="1">Belongs to the tRNA pseudouridine synthase TruA family.</text>
</comment>